<reference key="1">
    <citation type="journal article" date="2006" name="Genome Biol.">
        <title>Genomic analysis reveals that Pseudomonas aeruginosa virulence is combinatorial.</title>
        <authorList>
            <person name="Lee D.G."/>
            <person name="Urbach J.M."/>
            <person name="Wu G."/>
            <person name="Liberati N.T."/>
            <person name="Feinbaum R.L."/>
            <person name="Miyata S."/>
            <person name="Diggins L.T."/>
            <person name="He J."/>
            <person name="Saucier M."/>
            <person name="Deziel E."/>
            <person name="Friedman L."/>
            <person name="Li L."/>
            <person name="Grills G."/>
            <person name="Montgomery K."/>
            <person name="Kucherlapati R."/>
            <person name="Rahme L.G."/>
            <person name="Ausubel F.M."/>
        </authorList>
    </citation>
    <scope>NUCLEOTIDE SEQUENCE [LARGE SCALE GENOMIC DNA]</scope>
    <source>
        <strain>UCBPP-PA14</strain>
    </source>
</reference>
<evidence type="ECO:0000255" key="1">
    <source>
        <dbReference type="HAMAP-Rule" id="MF_00008"/>
    </source>
</evidence>
<proteinExistence type="inferred from homology"/>
<keyword id="KW-0963">Cytoplasm</keyword>
<keyword id="KW-0489">Methyltransferase</keyword>
<keyword id="KW-0545">Nucleotide biosynthesis</keyword>
<keyword id="KW-0808">Transferase</keyword>
<name>TYSY_PSEAB</name>
<feature type="chain" id="PRO_1000000651" description="Thymidylate synthase">
    <location>
        <begin position="1"/>
        <end position="264"/>
    </location>
</feature>
<feature type="active site" description="Nucleophile" evidence="1">
    <location>
        <position position="146"/>
    </location>
</feature>
<feature type="binding site" description="in other chain" evidence="1">
    <location>
        <position position="21"/>
    </location>
    <ligand>
        <name>dUMP</name>
        <dbReference type="ChEBI" id="CHEBI:246422"/>
        <note>ligand shared between dimeric partners</note>
    </ligand>
</feature>
<feature type="binding site" evidence="1">
    <location>
        <position position="51"/>
    </location>
    <ligand>
        <name>(6R)-5,10-methylene-5,6,7,8-tetrahydrofolate</name>
        <dbReference type="ChEBI" id="CHEBI:15636"/>
    </ligand>
</feature>
<feature type="binding site" evidence="1">
    <location>
        <begin position="126"/>
        <end position="127"/>
    </location>
    <ligand>
        <name>dUMP</name>
        <dbReference type="ChEBI" id="CHEBI:246422"/>
        <note>ligand shared between dimeric partners</note>
    </ligand>
</feature>
<feature type="binding site" description="in other chain" evidence="1">
    <location>
        <begin position="166"/>
        <end position="169"/>
    </location>
    <ligand>
        <name>dUMP</name>
        <dbReference type="ChEBI" id="CHEBI:246422"/>
        <note>ligand shared between dimeric partners</note>
    </ligand>
</feature>
<feature type="binding site" evidence="1">
    <location>
        <position position="169"/>
    </location>
    <ligand>
        <name>(6R)-5,10-methylene-5,6,7,8-tetrahydrofolate</name>
        <dbReference type="ChEBI" id="CHEBI:15636"/>
    </ligand>
</feature>
<feature type="binding site" description="in other chain" evidence="1">
    <location>
        <position position="177"/>
    </location>
    <ligand>
        <name>dUMP</name>
        <dbReference type="ChEBI" id="CHEBI:246422"/>
        <note>ligand shared between dimeric partners</note>
    </ligand>
</feature>
<feature type="binding site" description="in other chain" evidence="1">
    <location>
        <begin position="207"/>
        <end position="209"/>
    </location>
    <ligand>
        <name>dUMP</name>
        <dbReference type="ChEBI" id="CHEBI:246422"/>
        <note>ligand shared between dimeric partners</note>
    </ligand>
</feature>
<feature type="binding site" evidence="1">
    <location>
        <position position="263"/>
    </location>
    <ligand>
        <name>(6R)-5,10-methylene-5,6,7,8-tetrahydrofolate</name>
        <dbReference type="ChEBI" id="CHEBI:15636"/>
    </ligand>
</feature>
<protein>
    <recommendedName>
        <fullName evidence="1">Thymidylate synthase</fullName>
        <shortName evidence="1">TS</shortName>
        <shortName evidence="1">TSase</shortName>
        <ecNumber evidence="1">2.1.1.45</ecNumber>
    </recommendedName>
</protein>
<dbReference type="EC" id="2.1.1.45" evidence="1"/>
<dbReference type="EMBL" id="CP000438">
    <property type="protein sequence ID" value="ABJ15306.1"/>
    <property type="molecule type" value="Genomic_DNA"/>
</dbReference>
<dbReference type="RefSeq" id="WP_003110588.1">
    <property type="nucleotide sequence ID" value="NZ_CP034244.1"/>
</dbReference>
<dbReference type="SMR" id="Q02U73"/>
<dbReference type="KEGG" id="pau:PA14_04480"/>
<dbReference type="PseudoCAP" id="PA14_04480"/>
<dbReference type="HOGENOM" id="CLU_021669_0_0_6"/>
<dbReference type="BioCyc" id="PAER208963:G1G74-374-MONOMER"/>
<dbReference type="UniPathway" id="UPA00575"/>
<dbReference type="Proteomes" id="UP000000653">
    <property type="component" value="Chromosome"/>
</dbReference>
<dbReference type="GO" id="GO:0005829">
    <property type="term" value="C:cytosol"/>
    <property type="evidence" value="ECO:0007669"/>
    <property type="project" value="TreeGrafter"/>
</dbReference>
<dbReference type="GO" id="GO:0004799">
    <property type="term" value="F:thymidylate synthase activity"/>
    <property type="evidence" value="ECO:0007669"/>
    <property type="project" value="UniProtKB-UniRule"/>
</dbReference>
<dbReference type="GO" id="GO:0006231">
    <property type="term" value="P:dTMP biosynthetic process"/>
    <property type="evidence" value="ECO:0007669"/>
    <property type="project" value="UniProtKB-UniRule"/>
</dbReference>
<dbReference type="GO" id="GO:0006235">
    <property type="term" value="P:dTTP biosynthetic process"/>
    <property type="evidence" value="ECO:0007669"/>
    <property type="project" value="UniProtKB-UniRule"/>
</dbReference>
<dbReference type="GO" id="GO:0032259">
    <property type="term" value="P:methylation"/>
    <property type="evidence" value="ECO:0007669"/>
    <property type="project" value="UniProtKB-KW"/>
</dbReference>
<dbReference type="CDD" id="cd00351">
    <property type="entry name" value="TS_Pyrimidine_HMase"/>
    <property type="match status" value="1"/>
</dbReference>
<dbReference type="FunFam" id="3.30.572.10:FF:000001">
    <property type="entry name" value="Thymidylate synthase"/>
    <property type="match status" value="1"/>
</dbReference>
<dbReference type="Gene3D" id="3.30.572.10">
    <property type="entry name" value="Thymidylate synthase/dCMP hydroxymethylase domain"/>
    <property type="match status" value="1"/>
</dbReference>
<dbReference type="HAMAP" id="MF_00008">
    <property type="entry name" value="Thymidy_synth_bact"/>
    <property type="match status" value="1"/>
</dbReference>
<dbReference type="InterPro" id="IPR045097">
    <property type="entry name" value="Thymidate_synth/dCMP_Mease"/>
</dbReference>
<dbReference type="InterPro" id="IPR023451">
    <property type="entry name" value="Thymidate_synth/dCMP_Mease_dom"/>
</dbReference>
<dbReference type="InterPro" id="IPR036926">
    <property type="entry name" value="Thymidate_synth/dCMP_Mease_sf"/>
</dbReference>
<dbReference type="InterPro" id="IPR000398">
    <property type="entry name" value="Thymidylate_synthase"/>
</dbReference>
<dbReference type="InterPro" id="IPR020940">
    <property type="entry name" value="Thymidylate_synthase_AS"/>
</dbReference>
<dbReference type="NCBIfam" id="NF002497">
    <property type="entry name" value="PRK01827.1-3"/>
    <property type="match status" value="1"/>
</dbReference>
<dbReference type="NCBIfam" id="NF002499">
    <property type="entry name" value="PRK01827.1-5"/>
    <property type="match status" value="1"/>
</dbReference>
<dbReference type="NCBIfam" id="TIGR03284">
    <property type="entry name" value="thym_sym"/>
    <property type="match status" value="2"/>
</dbReference>
<dbReference type="PANTHER" id="PTHR11548:SF9">
    <property type="entry name" value="THYMIDYLATE SYNTHASE"/>
    <property type="match status" value="1"/>
</dbReference>
<dbReference type="PANTHER" id="PTHR11548">
    <property type="entry name" value="THYMIDYLATE SYNTHASE 1"/>
    <property type="match status" value="1"/>
</dbReference>
<dbReference type="Pfam" id="PF00303">
    <property type="entry name" value="Thymidylat_synt"/>
    <property type="match status" value="1"/>
</dbReference>
<dbReference type="PRINTS" id="PR00108">
    <property type="entry name" value="THYMDSNTHASE"/>
</dbReference>
<dbReference type="SUPFAM" id="SSF55831">
    <property type="entry name" value="Thymidylate synthase/dCMP hydroxymethylase"/>
    <property type="match status" value="1"/>
</dbReference>
<dbReference type="PROSITE" id="PS00091">
    <property type="entry name" value="THYMIDYLATE_SYNTHASE"/>
    <property type="match status" value="1"/>
</dbReference>
<comment type="function">
    <text evidence="1">Catalyzes the reductive methylation of 2'-deoxyuridine-5'-monophosphate (dUMP) to 2'-deoxythymidine-5'-monophosphate (dTMP) while utilizing 5,10-methylenetetrahydrofolate (mTHF) as the methyl donor and reductant in the reaction, yielding dihydrofolate (DHF) as a by-product. This enzymatic reaction provides an intracellular de novo source of dTMP, an essential precursor for DNA biosynthesis.</text>
</comment>
<comment type="catalytic activity">
    <reaction evidence="1">
        <text>dUMP + (6R)-5,10-methylene-5,6,7,8-tetrahydrofolate = 7,8-dihydrofolate + dTMP</text>
        <dbReference type="Rhea" id="RHEA:12104"/>
        <dbReference type="ChEBI" id="CHEBI:15636"/>
        <dbReference type="ChEBI" id="CHEBI:57451"/>
        <dbReference type="ChEBI" id="CHEBI:63528"/>
        <dbReference type="ChEBI" id="CHEBI:246422"/>
        <dbReference type="EC" id="2.1.1.45"/>
    </reaction>
</comment>
<comment type="pathway">
    <text evidence="1">Pyrimidine metabolism; dTTP biosynthesis.</text>
</comment>
<comment type="subunit">
    <text evidence="1">Homodimer.</text>
</comment>
<comment type="subcellular location">
    <subcellularLocation>
        <location evidence="1">Cytoplasm</location>
    </subcellularLocation>
</comment>
<comment type="similarity">
    <text evidence="1">Belongs to the thymidylate synthase family. Bacterial-type ThyA subfamily.</text>
</comment>
<accession>Q02U73</accession>
<organism>
    <name type="scientific">Pseudomonas aeruginosa (strain UCBPP-PA14)</name>
    <dbReference type="NCBI Taxonomy" id="208963"/>
    <lineage>
        <taxon>Bacteria</taxon>
        <taxon>Pseudomonadati</taxon>
        <taxon>Pseudomonadota</taxon>
        <taxon>Gammaproteobacteria</taxon>
        <taxon>Pseudomonadales</taxon>
        <taxon>Pseudomonadaceae</taxon>
        <taxon>Pseudomonas</taxon>
    </lineage>
</organism>
<gene>
    <name evidence="1" type="primary">thyA</name>
    <name type="ordered locus">PA14_04480</name>
</gene>
<sequence length="264" mass="30016">MKQYLDLMRHVREHGTFKSDRTGTGTYSVFGHQMRFDLAAGFPLVTTKKCHLKSIVHELLWFLKGSTNIAYLKEHGVSIWDEWADENGDLGPVYGYQWRSWPAPDGRHIDQIANLMAMLKKNPDSRRLIVSAWNPALIDEMALPPCHALFQFYVADGKLSCQLYQRSADIFLGVPFNIASYALLTLMVAQVAGLQPGEFIWTGGDCHLYANHLEQADLQLTREPLPLPSMKLNPEVKDLFDFRFEDFELVGYEAHPHIKAPVAV</sequence>